<keyword id="KW-0030">Aminoacyl-tRNA synthetase</keyword>
<keyword id="KW-0067">ATP-binding</keyword>
<keyword id="KW-0963">Cytoplasm</keyword>
<keyword id="KW-0436">Ligase</keyword>
<keyword id="KW-0547">Nucleotide-binding</keyword>
<keyword id="KW-0648">Protein biosynthesis</keyword>
<name>SYE1_THEPX</name>
<evidence type="ECO:0000255" key="1">
    <source>
        <dbReference type="HAMAP-Rule" id="MF_00022"/>
    </source>
</evidence>
<accession>B0K5F4</accession>
<sequence>MNNLRVRFAPSPTGAIHIGNIRTALFNYLFSRSEGATFVLRIEDTDLERSSKEFEELIFKELEWLGIEWDEGPDKPGPYGPYRQSERLEIYHKFAQKLIEEKKAYRCYCTPEELEEDRRKAVERGDIPRYSGRCRYLTKEQEEAFIREGRKPVIRFIIPDDEVIEFEDMIKGKITIKSDTLGGDMVIVKSDGMPTYNFAVVIDDALMKITHVIRGEDHIYNTPKQILIYKALGFEIPKFAHAPLILGPDRTKLSKRHGNTYIGQYRELGYLPEAMFNFLSLLSWSPEDNVEIMSKEEIIKKFNFRRIHSANPVFDIEKLNWMNQQYIQKSSIERIVDLAIPHLRRAGYIDGIDDMVYNWLKDVISLYKDGLQYVAQITEKAKMFFVEEVEYSDETVKILNSPNSKIVLEVVKKVIEEADEITEEYVKDLLKKLQKETKVKGKEFFMPIRVAITGEDHGPELVKIIPLLGKDKVINRLKKAINLIK</sequence>
<dbReference type="EC" id="6.1.1.17" evidence="1"/>
<dbReference type="EMBL" id="CP000923">
    <property type="protein sequence ID" value="ABY92147.1"/>
    <property type="molecule type" value="Genomic_DNA"/>
</dbReference>
<dbReference type="RefSeq" id="WP_009052841.1">
    <property type="nucleotide sequence ID" value="NC_010320.1"/>
</dbReference>
<dbReference type="SMR" id="B0K5F4"/>
<dbReference type="KEGG" id="tex:Teth514_0844"/>
<dbReference type="HOGENOM" id="CLU_015768_6_3_9"/>
<dbReference type="Proteomes" id="UP000002155">
    <property type="component" value="Chromosome"/>
</dbReference>
<dbReference type="GO" id="GO:0005829">
    <property type="term" value="C:cytosol"/>
    <property type="evidence" value="ECO:0007669"/>
    <property type="project" value="TreeGrafter"/>
</dbReference>
<dbReference type="GO" id="GO:0005524">
    <property type="term" value="F:ATP binding"/>
    <property type="evidence" value="ECO:0007669"/>
    <property type="project" value="UniProtKB-UniRule"/>
</dbReference>
<dbReference type="GO" id="GO:0004818">
    <property type="term" value="F:glutamate-tRNA ligase activity"/>
    <property type="evidence" value="ECO:0007669"/>
    <property type="project" value="UniProtKB-UniRule"/>
</dbReference>
<dbReference type="GO" id="GO:0000049">
    <property type="term" value="F:tRNA binding"/>
    <property type="evidence" value="ECO:0007669"/>
    <property type="project" value="InterPro"/>
</dbReference>
<dbReference type="GO" id="GO:0008270">
    <property type="term" value="F:zinc ion binding"/>
    <property type="evidence" value="ECO:0007669"/>
    <property type="project" value="InterPro"/>
</dbReference>
<dbReference type="GO" id="GO:0006424">
    <property type="term" value="P:glutamyl-tRNA aminoacylation"/>
    <property type="evidence" value="ECO:0007669"/>
    <property type="project" value="UniProtKB-UniRule"/>
</dbReference>
<dbReference type="CDD" id="cd00808">
    <property type="entry name" value="GluRS_core"/>
    <property type="match status" value="1"/>
</dbReference>
<dbReference type="FunFam" id="1.10.10.350:FF:000002">
    <property type="entry name" value="Glutamate--tRNA ligase"/>
    <property type="match status" value="1"/>
</dbReference>
<dbReference type="FunFam" id="3.40.50.620:FF:000045">
    <property type="entry name" value="Glutamate--tRNA ligase, mitochondrial"/>
    <property type="match status" value="1"/>
</dbReference>
<dbReference type="Gene3D" id="1.10.10.350">
    <property type="match status" value="1"/>
</dbReference>
<dbReference type="Gene3D" id="3.40.50.620">
    <property type="entry name" value="HUPs"/>
    <property type="match status" value="1"/>
</dbReference>
<dbReference type="HAMAP" id="MF_00022">
    <property type="entry name" value="Glu_tRNA_synth_type1"/>
    <property type="match status" value="1"/>
</dbReference>
<dbReference type="InterPro" id="IPR045462">
    <property type="entry name" value="aa-tRNA-synth_I_cd-bd"/>
</dbReference>
<dbReference type="InterPro" id="IPR020751">
    <property type="entry name" value="aa-tRNA-synth_I_codon-bd_sub2"/>
</dbReference>
<dbReference type="InterPro" id="IPR001412">
    <property type="entry name" value="aa-tRNA-synth_I_CS"/>
</dbReference>
<dbReference type="InterPro" id="IPR008925">
    <property type="entry name" value="aa_tRNA-synth_I_cd-bd_sf"/>
</dbReference>
<dbReference type="InterPro" id="IPR004527">
    <property type="entry name" value="Glu-tRNA-ligase_bac/mito"/>
</dbReference>
<dbReference type="InterPro" id="IPR000924">
    <property type="entry name" value="Glu/Gln-tRNA-synth"/>
</dbReference>
<dbReference type="InterPro" id="IPR020058">
    <property type="entry name" value="Glu/Gln-tRNA-synth_Ib_cat-dom"/>
</dbReference>
<dbReference type="InterPro" id="IPR049940">
    <property type="entry name" value="GluQ/Sye"/>
</dbReference>
<dbReference type="InterPro" id="IPR033910">
    <property type="entry name" value="GluRS_core"/>
</dbReference>
<dbReference type="InterPro" id="IPR014729">
    <property type="entry name" value="Rossmann-like_a/b/a_fold"/>
</dbReference>
<dbReference type="NCBIfam" id="TIGR00464">
    <property type="entry name" value="gltX_bact"/>
    <property type="match status" value="1"/>
</dbReference>
<dbReference type="PANTHER" id="PTHR43311">
    <property type="entry name" value="GLUTAMATE--TRNA LIGASE"/>
    <property type="match status" value="1"/>
</dbReference>
<dbReference type="PANTHER" id="PTHR43311:SF2">
    <property type="entry name" value="GLUTAMATE--TRNA LIGASE, MITOCHONDRIAL-RELATED"/>
    <property type="match status" value="1"/>
</dbReference>
<dbReference type="Pfam" id="PF19269">
    <property type="entry name" value="Anticodon_2"/>
    <property type="match status" value="1"/>
</dbReference>
<dbReference type="Pfam" id="PF00749">
    <property type="entry name" value="tRNA-synt_1c"/>
    <property type="match status" value="1"/>
</dbReference>
<dbReference type="PRINTS" id="PR00987">
    <property type="entry name" value="TRNASYNTHGLU"/>
</dbReference>
<dbReference type="SUPFAM" id="SSF48163">
    <property type="entry name" value="An anticodon-binding domain of class I aminoacyl-tRNA synthetases"/>
    <property type="match status" value="1"/>
</dbReference>
<dbReference type="SUPFAM" id="SSF52374">
    <property type="entry name" value="Nucleotidylyl transferase"/>
    <property type="match status" value="1"/>
</dbReference>
<dbReference type="PROSITE" id="PS00178">
    <property type="entry name" value="AA_TRNA_LIGASE_I"/>
    <property type="match status" value="1"/>
</dbReference>
<organism>
    <name type="scientific">Thermoanaerobacter sp. (strain X514)</name>
    <dbReference type="NCBI Taxonomy" id="399726"/>
    <lineage>
        <taxon>Bacteria</taxon>
        <taxon>Bacillati</taxon>
        <taxon>Bacillota</taxon>
        <taxon>Clostridia</taxon>
        <taxon>Thermoanaerobacterales</taxon>
        <taxon>Thermoanaerobacteraceae</taxon>
        <taxon>Thermoanaerobacter</taxon>
    </lineage>
</organism>
<gene>
    <name evidence="1" type="primary">gltX1</name>
    <name type="ordered locus">Teth514_0844</name>
</gene>
<proteinExistence type="inferred from homology"/>
<reference key="1">
    <citation type="submission" date="2008-01" db="EMBL/GenBank/DDBJ databases">
        <title>Complete sequence of Thermoanaerobacter sp. X514.</title>
        <authorList>
            <consortium name="US DOE Joint Genome Institute"/>
            <person name="Copeland A."/>
            <person name="Lucas S."/>
            <person name="Lapidus A."/>
            <person name="Barry K."/>
            <person name="Glavina del Rio T."/>
            <person name="Dalin E."/>
            <person name="Tice H."/>
            <person name="Pitluck S."/>
            <person name="Bruce D."/>
            <person name="Goodwin L."/>
            <person name="Saunders E."/>
            <person name="Brettin T."/>
            <person name="Detter J.C."/>
            <person name="Han C."/>
            <person name="Schmutz J."/>
            <person name="Larimer F."/>
            <person name="Land M."/>
            <person name="Hauser L."/>
            <person name="Kyrpides N."/>
            <person name="Kim E."/>
            <person name="Hemme C."/>
            <person name="Fields M.W."/>
            <person name="He Z."/>
            <person name="Zhou J."/>
            <person name="Richardson P."/>
        </authorList>
    </citation>
    <scope>NUCLEOTIDE SEQUENCE [LARGE SCALE GENOMIC DNA]</scope>
    <source>
        <strain>X514</strain>
    </source>
</reference>
<comment type="function">
    <text evidence="1">Catalyzes the attachment of glutamate to tRNA(Glu) in a two-step reaction: glutamate is first activated by ATP to form Glu-AMP and then transferred to the acceptor end of tRNA(Glu).</text>
</comment>
<comment type="catalytic activity">
    <reaction evidence="1">
        <text>tRNA(Glu) + L-glutamate + ATP = L-glutamyl-tRNA(Glu) + AMP + diphosphate</text>
        <dbReference type="Rhea" id="RHEA:23540"/>
        <dbReference type="Rhea" id="RHEA-COMP:9663"/>
        <dbReference type="Rhea" id="RHEA-COMP:9680"/>
        <dbReference type="ChEBI" id="CHEBI:29985"/>
        <dbReference type="ChEBI" id="CHEBI:30616"/>
        <dbReference type="ChEBI" id="CHEBI:33019"/>
        <dbReference type="ChEBI" id="CHEBI:78442"/>
        <dbReference type="ChEBI" id="CHEBI:78520"/>
        <dbReference type="ChEBI" id="CHEBI:456215"/>
        <dbReference type="EC" id="6.1.1.17"/>
    </reaction>
</comment>
<comment type="subunit">
    <text evidence="1">Monomer.</text>
</comment>
<comment type="subcellular location">
    <subcellularLocation>
        <location evidence="1">Cytoplasm</location>
    </subcellularLocation>
</comment>
<comment type="similarity">
    <text evidence="1">Belongs to the class-I aminoacyl-tRNA synthetase family. Glutamate--tRNA ligase type 1 subfamily.</text>
</comment>
<feature type="chain" id="PRO_0000367783" description="Glutamate--tRNA ligase 1">
    <location>
        <begin position="1"/>
        <end position="485"/>
    </location>
</feature>
<feature type="short sequence motif" description="'HIGH' region" evidence="1">
    <location>
        <begin position="10"/>
        <end position="20"/>
    </location>
</feature>
<feature type="short sequence motif" description="'KMSKS' region" evidence="1">
    <location>
        <begin position="252"/>
        <end position="256"/>
    </location>
</feature>
<feature type="binding site" evidence="1">
    <location>
        <position position="255"/>
    </location>
    <ligand>
        <name>ATP</name>
        <dbReference type="ChEBI" id="CHEBI:30616"/>
    </ligand>
</feature>
<protein>
    <recommendedName>
        <fullName evidence="1">Glutamate--tRNA ligase 1</fullName>
        <ecNumber evidence="1">6.1.1.17</ecNumber>
    </recommendedName>
    <alternativeName>
        <fullName evidence="1">Glutamyl-tRNA synthetase 1</fullName>
        <shortName evidence="1">GluRS 1</shortName>
    </alternativeName>
</protein>